<gene>
    <name evidence="1" type="primary">rplP</name>
    <name type="ordered locus">gbs0065</name>
</gene>
<organism>
    <name type="scientific">Streptococcus agalactiae serotype III (strain NEM316)</name>
    <dbReference type="NCBI Taxonomy" id="211110"/>
    <lineage>
        <taxon>Bacteria</taxon>
        <taxon>Bacillati</taxon>
        <taxon>Bacillota</taxon>
        <taxon>Bacilli</taxon>
        <taxon>Lactobacillales</taxon>
        <taxon>Streptococcaceae</taxon>
        <taxon>Streptococcus</taxon>
    </lineage>
</organism>
<proteinExistence type="inferred from homology"/>
<evidence type="ECO:0000255" key="1">
    <source>
        <dbReference type="HAMAP-Rule" id="MF_01342"/>
    </source>
</evidence>
<evidence type="ECO:0000305" key="2"/>
<name>RL16_STRA3</name>
<sequence length="137" mass="15438">MLVPKRVKHRREFRGKMRGEAKGGKEVSFGEYGLQATTSHWITNRQIEAARIAMTRYMKRGGKVWIKIFPHKSYTAKAIGVRMGSGKGAPEGWVAPVKRGKVMFEIAGVSEEVAREALRLASHKLPVKCKFVKREAE</sequence>
<keyword id="KW-0687">Ribonucleoprotein</keyword>
<keyword id="KW-0689">Ribosomal protein</keyword>
<keyword id="KW-0694">RNA-binding</keyword>
<keyword id="KW-0699">rRNA-binding</keyword>
<keyword id="KW-0820">tRNA-binding</keyword>
<protein>
    <recommendedName>
        <fullName evidence="1">Large ribosomal subunit protein uL16</fullName>
    </recommendedName>
    <alternativeName>
        <fullName evidence="2">50S ribosomal protein L16</fullName>
    </alternativeName>
</protein>
<accession>Q8E7T3</accession>
<comment type="function">
    <text evidence="1">Binds 23S rRNA and is also seen to make contacts with the A and possibly P site tRNAs.</text>
</comment>
<comment type="subunit">
    <text evidence="1">Part of the 50S ribosomal subunit.</text>
</comment>
<comment type="similarity">
    <text evidence="1">Belongs to the universal ribosomal protein uL16 family.</text>
</comment>
<dbReference type="EMBL" id="AL766843">
    <property type="protein sequence ID" value="CAD45710.1"/>
    <property type="molecule type" value="Genomic_DNA"/>
</dbReference>
<dbReference type="RefSeq" id="WP_000960950.1">
    <property type="nucleotide sequence ID" value="NC_004368.1"/>
</dbReference>
<dbReference type="SMR" id="Q8E7T3"/>
<dbReference type="GeneID" id="93793079"/>
<dbReference type="KEGG" id="san:rplP"/>
<dbReference type="eggNOG" id="COG0197">
    <property type="taxonomic scope" value="Bacteria"/>
</dbReference>
<dbReference type="HOGENOM" id="CLU_078858_2_1_9"/>
<dbReference type="Proteomes" id="UP000000823">
    <property type="component" value="Chromosome"/>
</dbReference>
<dbReference type="GO" id="GO:0022625">
    <property type="term" value="C:cytosolic large ribosomal subunit"/>
    <property type="evidence" value="ECO:0007669"/>
    <property type="project" value="TreeGrafter"/>
</dbReference>
<dbReference type="GO" id="GO:0019843">
    <property type="term" value="F:rRNA binding"/>
    <property type="evidence" value="ECO:0007669"/>
    <property type="project" value="UniProtKB-UniRule"/>
</dbReference>
<dbReference type="GO" id="GO:0003735">
    <property type="term" value="F:structural constituent of ribosome"/>
    <property type="evidence" value="ECO:0007669"/>
    <property type="project" value="InterPro"/>
</dbReference>
<dbReference type="GO" id="GO:0000049">
    <property type="term" value="F:tRNA binding"/>
    <property type="evidence" value="ECO:0007669"/>
    <property type="project" value="UniProtKB-KW"/>
</dbReference>
<dbReference type="GO" id="GO:0006412">
    <property type="term" value="P:translation"/>
    <property type="evidence" value="ECO:0007669"/>
    <property type="project" value="UniProtKB-UniRule"/>
</dbReference>
<dbReference type="CDD" id="cd01433">
    <property type="entry name" value="Ribosomal_L16_L10e"/>
    <property type="match status" value="1"/>
</dbReference>
<dbReference type="FunFam" id="3.90.1170.10:FF:000001">
    <property type="entry name" value="50S ribosomal protein L16"/>
    <property type="match status" value="1"/>
</dbReference>
<dbReference type="Gene3D" id="3.90.1170.10">
    <property type="entry name" value="Ribosomal protein L10e/L16"/>
    <property type="match status" value="1"/>
</dbReference>
<dbReference type="HAMAP" id="MF_01342">
    <property type="entry name" value="Ribosomal_uL16"/>
    <property type="match status" value="1"/>
</dbReference>
<dbReference type="InterPro" id="IPR047873">
    <property type="entry name" value="Ribosomal_uL16"/>
</dbReference>
<dbReference type="InterPro" id="IPR000114">
    <property type="entry name" value="Ribosomal_uL16_bact-type"/>
</dbReference>
<dbReference type="InterPro" id="IPR020798">
    <property type="entry name" value="Ribosomal_uL16_CS"/>
</dbReference>
<dbReference type="InterPro" id="IPR016180">
    <property type="entry name" value="Ribosomal_uL16_dom"/>
</dbReference>
<dbReference type="InterPro" id="IPR036920">
    <property type="entry name" value="Ribosomal_uL16_sf"/>
</dbReference>
<dbReference type="NCBIfam" id="TIGR01164">
    <property type="entry name" value="rplP_bact"/>
    <property type="match status" value="1"/>
</dbReference>
<dbReference type="PANTHER" id="PTHR12220">
    <property type="entry name" value="50S/60S RIBOSOMAL PROTEIN L16"/>
    <property type="match status" value="1"/>
</dbReference>
<dbReference type="PANTHER" id="PTHR12220:SF13">
    <property type="entry name" value="LARGE RIBOSOMAL SUBUNIT PROTEIN UL16M"/>
    <property type="match status" value="1"/>
</dbReference>
<dbReference type="Pfam" id="PF00252">
    <property type="entry name" value="Ribosomal_L16"/>
    <property type="match status" value="1"/>
</dbReference>
<dbReference type="PRINTS" id="PR00060">
    <property type="entry name" value="RIBOSOMALL16"/>
</dbReference>
<dbReference type="SUPFAM" id="SSF54686">
    <property type="entry name" value="Ribosomal protein L16p/L10e"/>
    <property type="match status" value="1"/>
</dbReference>
<dbReference type="PROSITE" id="PS00586">
    <property type="entry name" value="RIBOSOMAL_L16_1"/>
    <property type="match status" value="1"/>
</dbReference>
<dbReference type="PROSITE" id="PS00701">
    <property type="entry name" value="RIBOSOMAL_L16_2"/>
    <property type="match status" value="1"/>
</dbReference>
<feature type="chain" id="PRO_0000062214" description="Large ribosomal subunit protein uL16">
    <location>
        <begin position="1"/>
        <end position="137"/>
    </location>
</feature>
<reference key="1">
    <citation type="journal article" date="2002" name="Mol. Microbiol.">
        <title>Genome sequence of Streptococcus agalactiae, a pathogen causing invasive neonatal disease.</title>
        <authorList>
            <person name="Glaser P."/>
            <person name="Rusniok C."/>
            <person name="Buchrieser C."/>
            <person name="Chevalier F."/>
            <person name="Frangeul L."/>
            <person name="Msadek T."/>
            <person name="Zouine M."/>
            <person name="Couve E."/>
            <person name="Lalioui L."/>
            <person name="Poyart C."/>
            <person name="Trieu-Cuot P."/>
            <person name="Kunst F."/>
        </authorList>
    </citation>
    <scope>NUCLEOTIDE SEQUENCE [LARGE SCALE GENOMIC DNA]</scope>
    <source>
        <strain>NEM316</strain>
    </source>
</reference>